<sequence length="235" mass="26186">MGNGMTKVLPGLYLGNFIDAKDPDQLGRNKITHIISIHESPQPLLQDITYLRISVSDTPEVPIKKHFKECVHFIHSCRLNGGNCLVHCFAGISRSTTIVIAYVMTVTGLGWQEVLEAIKASRPIANPNPGFRQQLEEFGWANSQKLRRQLEERFGEIPFRDEEDLRALLPLCRRCRQGSATSAASATTASSAAEGTLQRLVPRSPRDSHQPLPLLARVKQTFFCLPRCLSRKGGK</sequence>
<organism>
    <name type="scientific">Mus musculus</name>
    <name type="common">Mouse</name>
    <dbReference type="NCBI Taxonomy" id="10090"/>
    <lineage>
        <taxon>Eukaryota</taxon>
        <taxon>Metazoa</taxon>
        <taxon>Chordata</taxon>
        <taxon>Craniata</taxon>
        <taxon>Vertebrata</taxon>
        <taxon>Euteleostomi</taxon>
        <taxon>Mammalia</taxon>
        <taxon>Eutheria</taxon>
        <taxon>Euarchontoglires</taxon>
        <taxon>Glires</taxon>
        <taxon>Rodentia</taxon>
        <taxon>Myomorpha</taxon>
        <taxon>Muroidea</taxon>
        <taxon>Muridae</taxon>
        <taxon>Murinae</taxon>
        <taxon>Mus</taxon>
        <taxon>Mus</taxon>
    </lineage>
</organism>
<feature type="initiator methionine" description="Removed">
    <location>
        <position position="1"/>
    </location>
</feature>
<feature type="chain" id="PRO_0000094825" description="Dual specificity protein phosphatase 15">
    <location>
        <begin position="2"/>
        <end position="235"/>
    </location>
</feature>
<feature type="domain" description="Tyrosine-protein phosphatase" evidence="3">
    <location>
        <begin position="4"/>
        <end position="144"/>
    </location>
</feature>
<feature type="region of interest" description="Disordered" evidence="5">
    <location>
        <begin position="183"/>
        <end position="212"/>
    </location>
</feature>
<feature type="compositionally biased region" description="Low complexity" evidence="5">
    <location>
        <begin position="183"/>
        <end position="193"/>
    </location>
</feature>
<feature type="active site" description="Phosphocysteine intermediate" evidence="3">
    <location>
        <position position="88"/>
    </location>
</feature>
<feature type="lipid moiety-binding region" description="N-myristoyl glycine" evidence="2">
    <location>
        <position position="2"/>
    </location>
</feature>
<feature type="splice variant" id="VSP_007294" description="In isoform 2." evidence="9 10">
    <original>CFAGISRSTTIVIAYVMT</original>
    <variation>WPLKHECRARSLSLLQCS</variation>
    <location>
        <begin position="88"/>
        <end position="105"/>
    </location>
</feature>
<feature type="splice variant" id="VSP_007295" description="In isoform 2." evidence="9 10">
    <location>
        <begin position="106"/>
        <end position="235"/>
    </location>
</feature>
<accession>Q8R4V2</accession>
<accession>A2APC1</accession>
<accession>Q14AH2</accession>
<gene>
    <name evidence="12" type="primary">Dusp15</name>
</gene>
<proteinExistence type="evidence at protein level"/>
<comment type="function">
    <text evidence="2">May dephosphorylate MAPK13, ATF2, ERBB3, PDGFRB and SNX6 (By similarity).</text>
</comment>
<comment type="function">
    <molecule>Isoform 1</molecule>
    <text evidence="1 7">May play a role in the regulation of oligodendrocyte differentiation (PubMed:22792334). May play a role in the regulation of myelin formation (By similarity). Involved in the regulation of Erk1/2 phosphorylation in Schwann cells; the signaling may be linked to the regulation of myelination (By similarity).</text>
</comment>
<comment type="catalytic activity">
    <reaction evidence="2 4">
        <text>O-phospho-L-tyrosyl-[protein] + H2O = L-tyrosyl-[protein] + phosphate</text>
        <dbReference type="Rhea" id="RHEA:10684"/>
        <dbReference type="Rhea" id="RHEA-COMP:10136"/>
        <dbReference type="Rhea" id="RHEA-COMP:20101"/>
        <dbReference type="ChEBI" id="CHEBI:15377"/>
        <dbReference type="ChEBI" id="CHEBI:43474"/>
        <dbReference type="ChEBI" id="CHEBI:46858"/>
        <dbReference type="ChEBI" id="CHEBI:61978"/>
        <dbReference type="EC" id="3.1.3.48"/>
    </reaction>
</comment>
<comment type="catalytic activity">
    <reaction>
        <text>O-phospho-L-seryl-[protein] + H2O = L-seryl-[protein] + phosphate</text>
        <dbReference type="Rhea" id="RHEA:20629"/>
        <dbReference type="Rhea" id="RHEA-COMP:9863"/>
        <dbReference type="Rhea" id="RHEA-COMP:11604"/>
        <dbReference type="ChEBI" id="CHEBI:15377"/>
        <dbReference type="ChEBI" id="CHEBI:29999"/>
        <dbReference type="ChEBI" id="CHEBI:43474"/>
        <dbReference type="ChEBI" id="CHEBI:83421"/>
        <dbReference type="EC" id="3.1.3.16"/>
    </reaction>
</comment>
<comment type="catalytic activity">
    <reaction>
        <text>O-phospho-L-threonyl-[protein] + H2O = L-threonyl-[protein] + phosphate</text>
        <dbReference type="Rhea" id="RHEA:47004"/>
        <dbReference type="Rhea" id="RHEA-COMP:11060"/>
        <dbReference type="Rhea" id="RHEA-COMP:11605"/>
        <dbReference type="ChEBI" id="CHEBI:15377"/>
        <dbReference type="ChEBI" id="CHEBI:30013"/>
        <dbReference type="ChEBI" id="CHEBI:43474"/>
        <dbReference type="ChEBI" id="CHEBI:61977"/>
        <dbReference type="EC" id="3.1.3.16"/>
    </reaction>
</comment>
<comment type="subcellular location">
    <subcellularLocation>
        <location evidence="2">Cell membrane</location>
        <topology>Lipid-anchor</topology>
        <orientation>Cytoplasmic side</orientation>
    </subcellularLocation>
</comment>
<comment type="alternative products">
    <event type="alternative splicing"/>
    <isoform>
        <id>Q8R4V2-1</id>
        <name>1</name>
        <sequence type="displayed"/>
    </isoform>
    <isoform>
        <id>Q8R4V2-2</id>
        <name>2</name>
        <sequence type="described" ref="VSP_007294 VSP_007295"/>
    </isoform>
</comment>
<comment type="tissue specificity">
    <text evidence="6 7 8">Isoform 1 is expressed in testis; predominantly in developing spermatocytes (at protein level) (PubMed:15138252). Isoform 2 is highly expressed in testis (PubMed:11432789). Expressed in spinal cord and specifically in oligodendroglial cells (PubMed:27532821). Expressed in embryonic brain cortex; down-regulated in mice with experimental autoimmune encephalomyelitis (EAE) (PubMed:22792334).</text>
</comment>
<comment type="developmental stage">
    <text evidence="7 8">Expression increases during oligodendrocyte differentiation. Detected in spinal cord in late fetal (18.5 dpc) and early postnatal (P3 and P7) stages. Expression decreases in later postnatal development (P14 and P30).</text>
</comment>
<comment type="induction">
    <text evidence="7">Down-regulated by nerve injury.</text>
</comment>
<comment type="miscellaneous">
    <molecule>Isoform 2</molecule>
    <text evidence="11">Inactive. Lacks the active site.</text>
</comment>
<comment type="similarity">
    <text evidence="11">Belongs to the protein-tyrosine phosphatase family. Non-receptor class dual specificity subfamily.</text>
</comment>
<comment type="sequence caution" evidence="11">
    <conflict type="frameshift">
        <sequence resource="EMBL" id="BU924460"/>
    </conflict>
</comment>
<name>DUS15_MOUSE</name>
<reference key="1">
    <citation type="journal article" date="2001" name="J. Biochem.">
        <title>A growing family of dual specificity phosphatases with low molecular masses.</title>
        <authorList>
            <person name="Aoki N."/>
            <person name="Aoyama K."/>
            <person name="Nagata M."/>
            <person name="Matsuda T."/>
        </authorList>
    </citation>
    <scope>NUCLEOTIDE SEQUENCE [MRNA] (ISOFORM 2)</scope>
    <scope>TISSUE SPECIFICITY</scope>
</reference>
<reference key="2">
    <citation type="journal article" date="2009" name="PLoS Biol.">
        <title>Lineage-specific biology revealed by a finished genome assembly of the mouse.</title>
        <authorList>
            <person name="Church D.M."/>
            <person name="Goodstadt L."/>
            <person name="Hillier L.W."/>
            <person name="Zody M.C."/>
            <person name="Goldstein S."/>
            <person name="She X."/>
            <person name="Bult C.J."/>
            <person name="Agarwala R."/>
            <person name="Cherry J.L."/>
            <person name="DiCuccio M."/>
            <person name="Hlavina W."/>
            <person name="Kapustin Y."/>
            <person name="Meric P."/>
            <person name="Maglott D."/>
            <person name="Birtle Z."/>
            <person name="Marques A.C."/>
            <person name="Graves T."/>
            <person name="Zhou S."/>
            <person name="Teague B."/>
            <person name="Potamousis K."/>
            <person name="Churas C."/>
            <person name="Place M."/>
            <person name="Herschleb J."/>
            <person name="Runnheim R."/>
            <person name="Forrest D."/>
            <person name="Amos-Landgraf J."/>
            <person name="Schwartz D.C."/>
            <person name="Cheng Z."/>
            <person name="Lindblad-Toh K."/>
            <person name="Eichler E.E."/>
            <person name="Ponting C.P."/>
        </authorList>
    </citation>
    <scope>NUCLEOTIDE SEQUENCE [LARGE SCALE GENOMIC DNA]</scope>
    <source>
        <strain>C57BL/6J</strain>
    </source>
</reference>
<reference key="3">
    <citation type="journal article" date="2004" name="Genome Res.">
        <title>The status, quality, and expansion of the NIH full-length cDNA project: the Mammalian Gene Collection (MGC).</title>
        <authorList>
            <consortium name="The MGC Project Team"/>
        </authorList>
    </citation>
    <scope>NUCLEOTIDE SEQUENCE [LARGE SCALE MRNA] (ISOFORM 2)</scope>
    <source>
        <tissue>Brain</tissue>
    </source>
</reference>
<reference key="4">
    <citation type="journal article" date="2001" name="Nucleic Acids Res.">
        <title>Gene expression in the developing mouse retina by EST sequencing and microarray analysis.</title>
        <authorList>
            <person name="Mu X."/>
            <person name="Zhao S."/>
            <person name="Pershad R."/>
            <person name="Hsieh T.-F."/>
            <person name="Scarpa A."/>
            <person name="Wang S.W."/>
            <person name="White R.A."/>
            <person name="Beremand P.D."/>
            <person name="Thomas T.L."/>
            <person name="Gan L."/>
            <person name="Klein W.H."/>
        </authorList>
    </citation>
    <scope>NUCLEOTIDE SEQUENCE [MRNA] OF 1-125 (ISOFORM 1)</scope>
</reference>
<reference key="5">
    <citation type="journal article" date="2004" name="J. Biol. Chem.">
        <title>VHY, a novel myristoylated testis-restricted dual specificity protein phosphatase related to VHX.</title>
        <authorList>
            <person name="Alonso A."/>
            <person name="Narisawa S."/>
            <person name="Bogetz J."/>
            <person name="Tautz L."/>
            <person name="Hadzic R."/>
            <person name="Huynh H."/>
            <person name="Williams S."/>
            <person name="Gjoerloff-Wingren A."/>
            <person name="Bremer M.C.D."/>
            <person name="Holsinger L.J."/>
            <person name="Millan J.L."/>
            <person name="Mustelin T."/>
        </authorList>
    </citation>
    <scope>TISSUE SPECIFICITY</scope>
</reference>
<reference key="6">
    <citation type="journal article" date="2012" name="PLoS ONE">
        <title>Identification of VHY/Dusp15 as a regulator of oligodendrocyte differentiation through a systematic genomics approach.</title>
        <authorList>
            <person name="Schmidt F."/>
            <person name="van den Eijnden M."/>
            <person name="Pescini Gobert R."/>
            <person name="Saborio G.P."/>
            <person name="Carboni S."/>
            <person name="Alliod C."/>
            <person name="Pouly S."/>
            <person name="Staugaitis S.M."/>
            <person name="Dutta R."/>
            <person name="Trapp B."/>
            <person name="Hooft van Huijsduijnen R."/>
        </authorList>
    </citation>
    <scope>FUNCTION</scope>
    <scope>TISSUE SPECIFICITY</scope>
    <scope>DEVELOPMENTAL STAGE</scope>
    <scope>INDUCTION</scope>
</reference>
<reference key="7">
    <citation type="journal article" date="2016" name="Glia">
        <title>The dual-specificity phosphatase Dusp15 is regulated by Sox10 and Myrf in myelinating oligodendrocytes.</title>
        <authorList>
            <person name="Muth K.N."/>
            <person name="Piefke S."/>
            <person name="Weider M."/>
            <person name="Sock E."/>
            <person name="Hermans-Borgmeyer I."/>
            <person name="Wegner M."/>
            <person name="Kuespert M."/>
        </authorList>
    </citation>
    <scope>DEVELOPMENTAL STAGE</scope>
</reference>
<evidence type="ECO:0000250" key="1">
    <source>
        <dbReference type="UniProtKB" id="B4F7B7"/>
    </source>
</evidence>
<evidence type="ECO:0000250" key="2">
    <source>
        <dbReference type="UniProtKB" id="Q9H1R2"/>
    </source>
</evidence>
<evidence type="ECO:0000255" key="3">
    <source>
        <dbReference type="PROSITE-ProRule" id="PRU00160"/>
    </source>
</evidence>
<evidence type="ECO:0000255" key="4">
    <source>
        <dbReference type="PROSITE-ProRule" id="PRU10044"/>
    </source>
</evidence>
<evidence type="ECO:0000256" key="5">
    <source>
        <dbReference type="SAM" id="MobiDB-lite"/>
    </source>
</evidence>
<evidence type="ECO:0000269" key="6">
    <source>
    </source>
</evidence>
<evidence type="ECO:0000269" key="7">
    <source>
    </source>
</evidence>
<evidence type="ECO:0000269" key="8">
    <source>
    </source>
</evidence>
<evidence type="ECO:0000303" key="9">
    <source>
    </source>
</evidence>
<evidence type="ECO:0000303" key="10">
    <source>
    </source>
</evidence>
<evidence type="ECO:0000305" key="11"/>
<evidence type="ECO:0000312" key="12">
    <source>
        <dbReference type="MGI" id="MGI:1934928"/>
    </source>
</evidence>
<keyword id="KW-0025">Alternative splicing</keyword>
<keyword id="KW-1003">Cell membrane</keyword>
<keyword id="KW-0378">Hydrolase</keyword>
<keyword id="KW-0449">Lipoprotein</keyword>
<keyword id="KW-0472">Membrane</keyword>
<keyword id="KW-0519">Myristate</keyword>
<keyword id="KW-0904">Protein phosphatase</keyword>
<keyword id="KW-1185">Reference proteome</keyword>
<dbReference type="EC" id="3.1.3.16" evidence="2 4"/>
<dbReference type="EC" id="3.1.3.48" evidence="2 4"/>
<dbReference type="EMBL" id="AF357887">
    <property type="protein sequence ID" value="AAM00226.1"/>
    <property type="molecule type" value="mRNA"/>
</dbReference>
<dbReference type="EMBL" id="AL833801">
    <property type="status" value="NOT_ANNOTATED_CDS"/>
    <property type="molecule type" value="Genomic_DNA"/>
</dbReference>
<dbReference type="EMBL" id="BC116841">
    <property type="protein sequence ID" value="AAI16842.1"/>
    <property type="molecule type" value="mRNA"/>
</dbReference>
<dbReference type="EMBL" id="BC116843">
    <property type="protein sequence ID" value="AAI16844.1"/>
    <property type="molecule type" value="mRNA"/>
</dbReference>
<dbReference type="EMBL" id="BU924460">
    <property type="status" value="NOT_ANNOTATED_CDS"/>
    <property type="molecule type" value="mRNA"/>
</dbReference>
<dbReference type="CCDS" id="CCDS16902.1">
    <molecule id="Q8R4V2-2"/>
</dbReference>
<dbReference type="CCDS" id="CCDS50754.1">
    <molecule id="Q8R4V2-1"/>
</dbReference>
<dbReference type="RefSeq" id="NP_001152848.1">
    <molecule id="Q8R4V2-1"/>
    <property type="nucleotide sequence ID" value="NM_001159376.1"/>
</dbReference>
<dbReference type="RefSeq" id="NP_665687.1">
    <molecule id="Q8R4V2-2"/>
    <property type="nucleotide sequence ID" value="NM_145744.2"/>
</dbReference>
<dbReference type="SMR" id="Q8R4V2"/>
<dbReference type="FunCoup" id="Q8R4V2">
    <property type="interactions" value="44"/>
</dbReference>
<dbReference type="STRING" id="10090.ENSMUSP00000123090"/>
<dbReference type="iPTMnet" id="Q8R4V2"/>
<dbReference type="PhosphoSitePlus" id="Q8R4V2"/>
<dbReference type="SwissPalm" id="Q8R4V2"/>
<dbReference type="PaxDb" id="10090-ENSMUSP00000123090"/>
<dbReference type="PeptideAtlas" id="Q8R4V2"/>
<dbReference type="ProteomicsDB" id="275411">
    <molecule id="Q8R4V2-1"/>
</dbReference>
<dbReference type="ProteomicsDB" id="275412">
    <molecule id="Q8R4V2-2"/>
</dbReference>
<dbReference type="Antibodypedia" id="25257">
    <property type="antibodies" value="210 antibodies from 25 providers"/>
</dbReference>
<dbReference type="DNASU" id="252864"/>
<dbReference type="Ensembl" id="ENSMUST00000037715.7">
    <molecule id="Q8R4V2-2"/>
    <property type="protein sequence ID" value="ENSMUSP00000045815.6"/>
    <property type="gene ID" value="ENSMUSG00000042662.17"/>
</dbReference>
<dbReference type="Ensembl" id="ENSMUST00000123121.9">
    <molecule id="Q8R4V2-1"/>
    <property type="protein sequence ID" value="ENSMUSP00000123090.2"/>
    <property type="gene ID" value="ENSMUSG00000042662.17"/>
</dbReference>
<dbReference type="GeneID" id="252864"/>
<dbReference type="KEGG" id="mmu:252864"/>
<dbReference type="UCSC" id="uc008ngu.2">
    <molecule id="Q8R4V2-2"/>
    <property type="organism name" value="mouse"/>
</dbReference>
<dbReference type="UCSC" id="uc012cgl.1">
    <molecule id="Q8R4V2-1"/>
    <property type="organism name" value="mouse"/>
</dbReference>
<dbReference type="AGR" id="MGI:1934928"/>
<dbReference type="CTD" id="128853"/>
<dbReference type="MGI" id="MGI:1934928">
    <property type="gene designation" value="Dusp15"/>
</dbReference>
<dbReference type="VEuPathDB" id="HostDB:ENSMUSG00000042662"/>
<dbReference type="eggNOG" id="KOG1716">
    <property type="taxonomic scope" value="Eukaryota"/>
</dbReference>
<dbReference type="GeneTree" id="ENSGT00940000162011"/>
<dbReference type="HOGENOM" id="CLU_027074_5_0_1"/>
<dbReference type="InParanoid" id="Q8R4V2"/>
<dbReference type="OMA" id="YIMAVTE"/>
<dbReference type="OrthoDB" id="9979246at2759"/>
<dbReference type="PhylomeDB" id="Q8R4V2"/>
<dbReference type="TreeFam" id="TF105126"/>
<dbReference type="BioGRID-ORCS" id="252864">
    <property type="hits" value="0 hits in 77 CRISPR screens"/>
</dbReference>
<dbReference type="PRO" id="PR:Q8R4V2"/>
<dbReference type="Proteomes" id="UP000000589">
    <property type="component" value="Chromosome 2"/>
</dbReference>
<dbReference type="RNAct" id="Q8R4V2">
    <property type="molecule type" value="protein"/>
</dbReference>
<dbReference type="Bgee" id="ENSMUSG00000042662">
    <property type="expression patterns" value="Expressed in sciatic nerve and 95 other cell types or tissues"/>
</dbReference>
<dbReference type="ExpressionAtlas" id="Q8R4V2">
    <property type="expression patterns" value="baseline and differential"/>
</dbReference>
<dbReference type="GO" id="GO:0005829">
    <property type="term" value="C:cytosol"/>
    <property type="evidence" value="ECO:0007669"/>
    <property type="project" value="Ensembl"/>
</dbReference>
<dbReference type="GO" id="GO:0005886">
    <property type="term" value="C:plasma membrane"/>
    <property type="evidence" value="ECO:0007669"/>
    <property type="project" value="UniProtKB-SubCell"/>
</dbReference>
<dbReference type="GO" id="GO:0004722">
    <property type="term" value="F:protein serine/threonine phosphatase activity"/>
    <property type="evidence" value="ECO:0007669"/>
    <property type="project" value="UniProtKB-EC"/>
</dbReference>
<dbReference type="GO" id="GO:0004725">
    <property type="term" value="F:protein tyrosine phosphatase activity"/>
    <property type="evidence" value="ECO:0007669"/>
    <property type="project" value="UniProtKB-EC"/>
</dbReference>
<dbReference type="GO" id="GO:0008138">
    <property type="term" value="F:protein tyrosine/serine/threonine phosphatase activity"/>
    <property type="evidence" value="ECO:0007669"/>
    <property type="project" value="Ensembl"/>
</dbReference>
<dbReference type="GO" id="GO:0000122">
    <property type="term" value="P:negative regulation of transcription by RNA polymerase II"/>
    <property type="evidence" value="ECO:0007669"/>
    <property type="project" value="Ensembl"/>
</dbReference>
<dbReference type="GO" id="GO:0070374">
    <property type="term" value="P:positive regulation of ERK1 and ERK2 cascade"/>
    <property type="evidence" value="ECO:0007669"/>
    <property type="project" value="Ensembl"/>
</dbReference>
<dbReference type="GO" id="GO:0048713">
    <property type="term" value="P:regulation of oligodendrocyte differentiation"/>
    <property type="evidence" value="ECO:0000315"/>
    <property type="project" value="UniProtKB"/>
</dbReference>
<dbReference type="CDD" id="cd14582">
    <property type="entry name" value="DSP_DUSP15"/>
    <property type="match status" value="1"/>
</dbReference>
<dbReference type="FunFam" id="3.90.190.10:FF:000052">
    <property type="entry name" value="Dual specificity phosphatase 15"/>
    <property type="match status" value="1"/>
</dbReference>
<dbReference type="Gene3D" id="3.90.190.10">
    <property type="entry name" value="Protein tyrosine phosphatase superfamily"/>
    <property type="match status" value="1"/>
</dbReference>
<dbReference type="InterPro" id="IPR000340">
    <property type="entry name" value="Dual-sp_phosphatase_cat-dom"/>
</dbReference>
<dbReference type="InterPro" id="IPR029021">
    <property type="entry name" value="Prot-tyrosine_phosphatase-like"/>
</dbReference>
<dbReference type="InterPro" id="IPR016130">
    <property type="entry name" value="Tyr_Pase_AS"/>
</dbReference>
<dbReference type="InterPro" id="IPR000387">
    <property type="entry name" value="Tyr_Pase_dom"/>
</dbReference>
<dbReference type="InterPro" id="IPR020422">
    <property type="entry name" value="TYR_PHOSPHATASE_DUAL_dom"/>
</dbReference>
<dbReference type="PANTHER" id="PTHR45948:SF4">
    <property type="entry name" value="DUAL SPECIFICITY PROTEIN PHOSPHATASE 15"/>
    <property type="match status" value="1"/>
</dbReference>
<dbReference type="PANTHER" id="PTHR45948">
    <property type="entry name" value="DUAL SPECIFICITY PROTEIN PHOSPHATASE DDB_G0269404-RELATED"/>
    <property type="match status" value="1"/>
</dbReference>
<dbReference type="Pfam" id="PF00782">
    <property type="entry name" value="DSPc"/>
    <property type="match status" value="1"/>
</dbReference>
<dbReference type="PRINTS" id="PR01908">
    <property type="entry name" value="ADSPHPHTASE"/>
</dbReference>
<dbReference type="SMART" id="SM00195">
    <property type="entry name" value="DSPc"/>
    <property type="match status" value="1"/>
</dbReference>
<dbReference type="SUPFAM" id="SSF52799">
    <property type="entry name" value="(Phosphotyrosine protein) phosphatases II"/>
    <property type="match status" value="1"/>
</dbReference>
<dbReference type="PROSITE" id="PS00383">
    <property type="entry name" value="TYR_PHOSPHATASE_1"/>
    <property type="match status" value="1"/>
</dbReference>
<dbReference type="PROSITE" id="PS50056">
    <property type="entry name" value="TYR_PHOSPHATASE_2"/>
    <property type="match status" value="1"/>
</dbReference>
<dbReference type="PROSITE" id="PS50054">
    <property type="entry name" value="TYR_PHOSPHATASE_DUAL"/>
    <property type="match status" value="1"/>
</dbReference>
<protein>
    <recommendedName>
        <fullName evidence="2">Dual specificity protein phosphatase 15</fullName>
        <ecNumber evidence="2 4">3.1.3.16</ecNumber>
        <ecNumber evidence="2 4">3.1.3.48</ecNumber>
    </recommendedName>
    <alternativeName>
        <fullName evidence="9">Dual specificity protein phosphatase T-DSP10</fullName>
    </alternativeName>
</protein>